<proteinExistence type="inferred from homology"/>
<organism>
    <name type="scientific">Burkholderia ambifaria (strain ATCC BAA-244 / DSM 16087 / CCUG 44356 / LMG 19182 / AMMD)</name>
    <name type="common">Burkholderia cepacia (strain AMMD)</name>
    <dbReference type="NCBI Taxonomy" id="339670"/>
    <lineage>
        <taxon>Bacteria</taxon>
        <taxon>Pseudomonadati</taxon>
        <taxon>Pseudomonadota</taxon>
        <taxon>Betaproteobacteria</taxon>
        <taxon>Burkholderiales</taxon>
        <taxon>Burkholderiaceae</taxon>
        <taxon>Burkholderia</taxon>
        <taxon>Burkholderia cepacia complex</taxon>
    </lineage>
</organism>
<protein>
    <recommendedName>
        <fullName evidence="1">Large ribosomal subunit protein bL28</fullName>
    </recommendedName>
    <alternativeName>
        <fullName evidence="3">50S ribosomal protein L28</fullName>
    </alternativeName>
</protein>
<accession>Q0BCL8</accession>
<evidence type="ECO:0000255" key="1">
    <source>
        <dbReference type="HAMAP-Rule" id="MF_00373"/>
    </source>
</evidence>
<evidence type="ECO:0000256" key="2">
    <source>
        <dbReference type="SAM" id="MobiDB-lite"/>
    </source>
</evidence>
<evidence type="ECO:0000305" key="3"/>
<dbReference type="EMBL" id="CP000440">
    <property type="protein sequence ID" value="ABI88105.1"/>
    <property type="molecule type" value="Genomic_DNA"/>
</dbReference>
<dbReference type="RefSeq" id="WP_004186391.1">
    <property type="nucleotide sequence ID" value="NZ_CP009798.1"/>
</dbReference>
<dbReference type="SMR" id="Q0BCL8"/>
<dbReference type="GeneID" id="98107656"/>
<dbReference type="KEGG" id="bam:Bamb_2549"/>
<dbReference type="PATRIC" id="fig|339670.21.peg.2358"/>
<dbReference type="eggNOG" id="COG0227">
    <property type="taxonomic scope" value="Bacteria"/>
</dbReference>
<dbReference type="Proteomes" id="UP000000662">
    <property type="component" value="Chromosome 1"/>
</dbReference>
<dbReference type="GO" id="GO:0022625">
    <property type="term" value="C:cytosolic large ribosomal subunit"/>
    <property type="evidence" value="ECO:0007669"/>
    <property type="project" value="TreeGrafter"/>
</dbReference>
<dbReference type="GO" id="GO:0003735">
    <property type="term" value="F:structural constituent of ribosome"/>
    <property type="evidence" value="ECO:0007669"/>
    <property type="project" value="InterPro"/>
</dbReference>
<dbReference type="GO" id="GO:0006412">
    <property type="term" value="P:translation"/>
    <property type="evidence" value="ECO:0007669"/>
    <property type="project" value="UniProtKB-UniRule"/>
</dbReference>
<dbReference type="FunFam" id="2.30.170.40:FF:000001">
    <property type="entry name" value="50S ribosomal protein L28"/>
    <property type="match status" value="1"/>
</dbReference>
<dbReference type="Gene3D" id="2.30.170.40">
    <property type="entry name" value="Ribosomal protein L28/L24"/>
    <property type="match status" value="1"/>
</dbReference>
<dbReference type="HAMAP" id="MF_00373">
    <property type="entry name" value="Ribosomal_bL28"/>
    <property type="match status" value="1"/>
</dbReference>
<dbReference type="InterPro" id="IPR026569">
    <property type="entry name" value="Ribosomal_bL28"/>
</dbReference>
<dbReference type="InterPro" id="IPR034704">
    <property type="entry name" value="Ribosomal_bL28/bL31-like_sf"/>
</dbReference>
<dbReference type="InterPro" id="IPR001383">
    <property type="entry name" value="Ribosomal_bL28_bact-type"/>
</dbReference>
<dbReference type="InterPro" id="IPR037147">
    <property type="entry name" value="Ribosomal_bL28_sf"/>
</dbReference>
<dbReference type="NCBIfam" id="TIGR00009">
    <property type="entry name" value="L28"/>
    <property type="match status" value="1"/>
</dbReference>
<dbReference type="PANTHER" id="PTHR13528">
    <property type="entry name" value="39S RIBOSOMAL PROTEIN L28, MITOCHONDRIAL"/>
    <property type="match status" value="1"/>
</dbReference>
<dbReference type="PANTHER" id="PTHR13528:SF2">
    <property type="entry name" value="LARGE RIBOSOMAL SUBUNIT PROTEIN BL28M"/>
    <property type="match status" value="1"/>
</dbReference>
<dbReference type="Pfam" id="PF00830">
    <property type="entry name" value="Ribosomal_L28"/>
    <property type="match status" value="1"/>
</dbReference>
<dbReference type="SUPFAM" id="SSF143800">
    <property type="entry name" value="L28p-like"/>
    <property type="match status" value="1"/>
</dbReference>
<feature type="chain" id="PRO_1000007188" description="Large ribosomal subunit protein bL28">
    <location>
        <begin position="1"/>
        <end position="77"/>
    </location>
</feature>
<feature type="region of interest" description="Disordered" evidence="2">
    <location>
        <begin position="1"/>
        <end position="25"/>
    </location>
</feature>
<reference key="1">
    <citation type="submission" date="2006-08" db="EMBL/GenBank/DDBJ databases">
        <title>Complete sequence of chromosome 1 of Burkholderia cepacia AMMD.</title>
        <authorList>
            <person name="Copeland A."/>
            <person name="Lucas S."/>
            <person name="Lapidus A."/>
            <person name="Barry K."/>
            <person name="Detter J.C."/>
            <person name="Glavina del Rio T."/>
            <person name="Hammon N."/>
            <person name="Israni S."/>
            <person name="Pitluck S."/>
            <person name="Bruce D."/>
            <person name="Chain P."/>
            <person name="Malfatti S."/>
            <person name="Shin M."/>
            <person name="Vergez L."/>
            <person name="Schmutz J."/>
            <person name="Larimer F."/>
            <person name="Land M."/>
            <person name="Hauser L."/>
            <person name="Kyrpides N."/>
            <person name="Kim E."/>
            <person name="Parke J."/>
            <person name="Coenye T."/>
            <person name="Konstantinidis K."/>
            <person name="Ramette A."/>
            <person name="Tiedje J."/>
            <person name="Richardson P."/>
        </authorList>
    </citation>
    <scope>NUCLEOTIDE SEQUENCE [LARGE SCALE GENOMIC DNA]</scope>
    <source>
        <strain>ATCC BAA-244 / DSM 16087 / CCUG 44356 / LMG 19182 / AMMD</strain>
    </source>
</reference>
<keyword id="KW-0687">Ribonucleoprotein</keyword>
<keyword id="KW-0689">Ribosomal protein</keyword>
<gene>
    <name evidence="1" type="primary">rpmB</name>
    <name type="ordered locus">Bamb_2549</name>
</gene>
<name>RL28_BURCM</name>
<comment type="similarity">
    <text evidence="1">Belongs to the bacterial ribosomal protein bL28 family.</text>
</comment>
<sequence>MARVCQVTGKAPMSGNNVSHANNKTKRRFLPNLQNRRFWVESENRWVRLRVSNAGLRLIDKNGIDSVLADLRARGEA</sequence>